<sequence length="411" mass="43993">MPAPAATRRDRIEDELGAHNYQPLDVVLARGSGVWLYDTAGRRYLDCLSAYSAVNQGHCHPRILAAMVEQAQRLTLTSRAFRHDQLAPLYEDLARLTGAHKVLPMNSGAEAVETALKAVRKWGYEARGVPAGQAEIIVCANNFHGRTLGIVGFSTDPDARGGYGPFAPGFTVVPFGDFAALQAAVTPRTVAFLVEPIQGEAGVILPPPGYFRQVRKLCSERDIVLILDEIQTGLGRTGAFLAEAHEGIEADVTLIGKALSGGFYPVSAVLSNQAVLGIFQPGQHGSTFGGNPLACAVARAALRVLHDEGMIDNAREQGAYFMQRLRALPGPVREVRGRGLMLALELEPDAGPARAYCERLMARGMLVKDTHGQTLRLSPPLIVTREQIDWACAQLAHVLAHSAPGSSGGPS</sequence>
<comment type="function">
    <text evidence="1">Catalyzes the interconversion of ornithine to glutamate semialdehyde.</text>
</comment>
<comment type="catalytic activity">
    <reaction evidence="1">
        <text>a 2-oxocarboxylate + L-ornithine = L-glutamate 5-semialdehyde + an L-alpha-amino acid</text>
        <dbReference type="Rhea" id="RHEA:13877"/>
        <dbReference type="ChEBI" id="CHEBI:35179"/>
        <dbReference type="ChEBI" id="CHEBI:46911"/>
        <dbReference type="ChEBI" id="CHEBI:58066"/>
        <dbReference type="ChEBI" id="CHEBI:59869"/>
        <dbReference type="EC" id="2.6.1.13"/>
    </reaction>
</comment>
<comment type="cofactor">
    <cofactor evidence="1">
        <name>pyridoxal 5'-phosphate</name>
        <dbReference type="ChEBI" id="CHEBI:597326"/>
    </cofactor>
</comment>
<comment type="pathway">
    <text evidence="1">Amino-acid biosynthesis; L-proline biosynthesis; L-glutamate 5-semialdehyde from L-ornithine: step 1/1.</text>
</comment>
<comment type="subcellular location">
    <subcellularLocation>
        <location evidence="1">Cytoplasm</location>
    </subcellularLocation>
</comment>
<comment type="similarity">
    <text evidence="1">Belongs to the class-III pyridoxal-phosphate-dependent aminotransferase family. OAT subfamily.</text>
</comment>
<comment type="sequence caution" evidence="2">
    <conflict type="erroneous initiation">
        <sequence resource="EMBL-CDS" id="CAE44867"/>
    </conflict>
</comment>
<dbReference type="EC" id="2.6.1.13" evidence="1"/>
<dbReference type="EMBL" id="BX640412">
    <property type="protein sequence ID" value="CAE44867.1"/>
    <property type="status" value="ALT_INIT"/>
    <property type="molecule type" value="Genomic_DNA"/>
</dbReference>
<dbReference type="RefSeq" id="NP_879387.1">
    <property type="nucleotide sequence ID" value="NC_002929.2"/>
</dbReference>
<dbReference type="SMR" id="Q7VSA0"/>
<dbReference type="STRING" id="257313.BP0539"/>
<dbReference type="PaxDb" id="257313-BP0539"/>
<dbReference type="KEGG" id="bpe:BP0539"/>
<dbReference type="PATRIC" id="fig|257313.5.peg.579"/>
<dbReference type="eggNOG" id="COG4992">
    <property type="taxonomic scope" value="Bacteria"/>
</dbReference>
<dbReference type="HOGENOM" id="CLU_016922_10_3_4"/>
<dbReference type="UniPathway" id="UPA00098">
    <property type="reaction ID" value="UER00358"/>
</dbReference>
<dbReference type="Proteomes" id="UP000002676">
    <property type="component" value="Chromosome"/>
</dbReference>
<dbReference type="GO" id="GO:0005737">
    <property type="term" value="C:cytoplasm"/>
    <property type="evidence" value="ECO:0007669"/>
    <property type="project" value="UniProtKB-SubCell"/>
</dbReference>
<dbReference type="GO" id="GO:0042802">
    <property type="term" value="F:identical protein binding"/>
    <property type="evidence" value="ECO:0007669"/>
    <property type="project" value="TreeGrafter"/>
</dbReference>
<dbReference type="GO" id="GO:0004587">
    <property type="term" value="F:ornithine aminotransferase activity"/>
    <property type="evidence" value="ECO:0007669"/>
    <property type="project" value="UniProtKB-UniRule"/>
</dbReference>
<dbReference type="GO" id="GO:0030170">
    <property type="term" value="F:pyridoxal phosphate binding"/>
    <property type="evidence" value="ECO:0007669"/>
    <property type="project" value="UniProtKB-UniRule"/>
</dbReference>
<dbReference type="GO" id="GO:0055129">
    <property type="term" value="P:L-proline biosynthetic process"/>
    <property type="evidence" value="ECO:0007669"/>
    <property type="project" value="UniProtKB-UniRule"/>
</dbReference>
<dbReference type="CDD" id="cd00610">
    <property type="entry name" value="OAT_like"/>
    <property type="match status" value="1"/>
</dbReference>
<dbReference type="FunFam" id="3.40.640.10:FF:000011">
    <property type="entry name" value="Ornithine aminotransferase"/>
    <property type="match status" value="1"/>
</dbReference>
<dbReference type="Gene3D" id="3.90.1150.10">
    <property type="entry name" value="Aspartate Aminotransferase, domain 1"/>
    <property type="match status" value="1"/>
</dbReference>
<dbReference type="Gene3D" id="3.40.640.10">
    <property type="entry name" value="Type I PLP-dependent aspartate aminotransferase-like (Major domain)"/>
    <property type="match status" value="1"/>
</dbReference>
<dbReference type="HAMAP" id="MF_01689">
    <property type="entry name" value="Ornith_aminotrans_3"/>
    <property type="match status" value="1"/>
</dbReference>
<dbReference type="InterPro" id="IPR005814">
    <property type="entry name" value="Aminotrans_3"/>
</dbReference>
<dbReference type="InterPro" id="IPR049704">
    <property type="entry name" value="Aminotrans_3_PPA_site"/>
</dbReference>
<dbReference type="InterPro" id="IPR050103">
    <property type="entry name" value="Class-III_PLP-dep_AT"/>
</dbReference>
<dbReference type="InterPro" id="IPR010164">
    <property type="entry name" value="Orn_aminotrans"/>
</dbReference>
<dbReference type="InterPro" id="IPR034757">
    <property type="entry name" value="Ornith_aminotrans_bact"/>
</dbReference>
<dbReference type="InterPro" id="IPR015424">
    <property type="entry name" value="PyrdxlP-dep_Trfase"/>
</dbReference>
<dbReference type="InterPro" id="IPR015421">
    <property type="entry name" value="PyrdxlP-dep_Trfase_major"/>
</dbReference>
<dbReference type="InterPro" id="IPR015422">
    <property type="entry name" value="PyrdxlP-dep_Trfase_small"/>
</dbReference>
<dbReference type="NCBIfam" id="TIGR01885">
    <property type="entry name" value="Orn_aminotrans"/>
    <property type="match status" value="1"/>
</dbReference>
<dbReference type="PANTHER" id="PTHR11986">
    <property type="entry name" value="AMINOTRANSFERASE CLASS III"/>
    <property type="match status" value="1"/>
</dbReference>
<dbReference type="PANTHER" id="PTHR11986:SF18">
    <property type="entry name" value="ORNITHINE AMINOTRANSFERASE, MITOCHONDRIAL"/>
    <property type="match status" value="1"/>
</dbReference>
<dbReference type="Pfam" id="PF00202">
    <property type="entry name" value="Aminotran_3"/>
    <property type="match status" value="1"/>
</dbReference>
<dbReference type="PIRSF" id="PIRSF000521">
    <property type="entry name" value="Transaminase_4ab_Lys_Orn"/>
    <property type="match status" value="1"/>
</dbReference>
<dbReference type="SUPFAM" id="SSF53383">
    <property type="entry name" value="PLP-dependent transferases"/>
    <property type="match status" value="1"/>
</dbReference>
<dbReference type="PROSITE" id="PS00600">
    <property type="entry name" value="AA_TRANSFER_CLASS_3"/>
    <property type="match status" value="1"/>
</dbReference>
<accession>Q7VSA0</accession>
<gene>
    <name evidence="1" type="primary">rocD</name>
    <name type="ordered locus">BP0539</name>
</gene>
<feature type="chain" id="PRO_0000120506" description="Ornithine aminotransferase">
    <location>
        <begin position="1"/>
        <end position="411"/>
    </location>
</feature>
<feature type="modified residue" description="N6-(pyridoxal phosphate)lysine" evidence="1">
    <location>
        <position position="257"/>
    </location>
</feature>
<evidence type="ECO:0000255" key="1">
    <source>
        <dbReference type="HAMAP-Rule" id="MF_01689"/>
    </source>
</evidence>
<evidence type="ECO:0000305" key="2"/>
<reference key="1">
    <citation type="journal article" date="2003" name="Nat. Genet.">
        <title>Comparative analysis of the genome sequences of Bordetella pertussis, Bordetella parapertussis and Bordetella bronchiseptica.</title>
        <authorList>
            <person name="Parkhill J."/>
            <person name="Sebaihia M."/>
            <person name="Preston A."/>
            <person name="Murphy L.D."/>
            <person name="Thomson N.R."/>
            <person name="Harris D.E."/>
            <person name="Holden M.T.G."/>
            <person name="Churcher C.M."/>
            <person name="Bentley S.D."/>
            <person name="Mungall K.L."/>
            <person name="Cerdeno-Tarraga A.-M."/>
            <person name="Temple L."/>
            <person name="James K.D."/>
            <person name="Harris B."/>
            <person name="Quail M.A."/>
            <person name="Achtman M."/>
            <person name="Atkin R."/>
            <person name="Baker S."/>
            <person name="Basham D."/>
            <person name="Bason N."/>
            <person name="Cherevach I."/>
            <person name="Chillingworth T."/>
            <person name="Collins M."/>
            <person name="Cronin A."/>
            <person name="Davis P."/>
            <person name="Doggett J."/>
            <person name="Feltwell T."/>
            <person name="Goble A."/>
            <person name="Hamlin N."/>
            <person name="Hauser H."/>
            <person name="Holroyd S."/>
            <person name="Jagels K."/>
            <person name="Leather S."/>
            <person name="Moule S."/>
            <person name="Norberczak H."/>
            <person name="O'Neil S."/>
            <person name="Ormond D."/>
            <person name="Price C."/>
            <person name="Rabbinowitsch E."/>
            <person name="Rutter S."/>
            <person name="Sanders M."/>
            <person name="Saunders D."/>
            <person name="Seeger K."/>
            <person name="Sharp S."/>
            <person name="Simmonds M."/>
            <person name="Skelton J."/>
            <person name="Squares R."/>
            <person name="Squares S."/>
            <person name="Stevens K."/>
            <person name="Unwin L."/>
            <person name="Whitehead S."/>
            <person name="Barrell B.G."/>
            <person name="Maskell D.J."/>
        </authorList>
    </citation>
    <scope>NUCLEOTIDE SEQUENCE [LARGE SCALE GENOMIC DNA]</scope>
    <source>
        <strain>Tohama I / ATCC BAA-589 / NCTC 13251</strain>
    </source>
</reference>
<proteinExistence type="inferred from homology"/>
<name>OAT_BORPE</name>
<organism>
    <name type="scientific">Bordetella pertussis (strain Tohama I / ATCC BAA-589 / NCTC 13251)</name>
    <dbReference type="NCBI Taxonomy" id="257313"/>
    <lineage>
        <taxon>Bacteria</taxon>
        <taxon>Pseudomonadati</taxon>
        <taxon>Pseudomonadota</taxon>
        <taxon>Betaproteobacteria</taxon>
        <taxon>Burkholderiales</taxon>
        <taxon>Alcaligenaceae</taxon>
        <taxon>Bordetella</taxon>
    </lineage>
</organism>
<protein>
    <recommendedName>
        <fullName evidence="1">Ornithine aminotransferase</fullName>
        <shortName evidence="1">OAT</shortName>
        <ecNumber evidence="1">2.6.1.13</ecNumber>
    </recommendedName>
    <alternativeName>
        <fullName evidence="1">Ornithine--oxo-acid aminotransferase</fullName>
    </alternativeName>
</protein>
<keyword id="KW-0028">Amino-acid biosynthesis</keyword>
<keyword id="KW-0032">Aminotransferase</keyword>
<keyword id="KW-0963">Cytoplasm</keyword>
<keyword id="KW-0641">Proline biosynthesis</keyword>
<keyword id="KW-0663">Pyridoxal phosphate</keyword>
<keyword id="KW-1185">Reference proteome</keyword>
<keyword id="KW-0808">Transferase</keyword>